<keyword id="KW-1003">Cell membrane</keyword>
<keyword id="KW-0255">Endonuclease</keyword>
<keyword id="KW-0378">Hydrolase</keyword>
<keyword id="KW-0472">Membrane</keyword>
<keyword id="KW-0540">Nuclease</keyword>
<keyword id="KW-0694">RNA-binding</keyword>
<keyword id="KW-0812">Transmembrane</keyword>
<keyword id="KW-1133">Transmembrane helix</keyword>
<evidence type="ECO:0000255" key="1">
    <source>
        <dbReference type="HAMAP-Rule" id="MF_00335"/>
    </source>
</evidence>
<evidence type="ECO:0000255" key="2">
    <source>
        <dbReference type="PROSITE-ProRule" id="PRU01175"/>
    </source>
</evidence>
<evidence type="ECO:0000256" key="3">
    <source>
        <dbReference type="SAM" id="MobiDB-lite"/>
    </source>
</evidence>
<protein>
    <recommendedName>
        <fullName evidence="1">Ribonuclease Y</fullName>
        <shortName evidence="1">RNase Y</shortName>
        <ecNumber evidence="1">3.1.-.-</ecNumber>
    </recommendedName>
</protein>
<name>RNY_STRP3</name>
<proteinExistence type="inferred from homology"/>
<reference key="1">
    <citation type="journal article" date="2002" name="Proc. Natl. Acad. Sci. U.S.A.">
        <title>Genome sequence of a serotype M3 strain of group A Streptococcus: phage-encoded toxins, the high-virulence phenotype, and clone emergence.</title>
        <authorList>
            <person name="Beres S.B."/>
            <person name="Sylva G.L."/>
            <person name="Barbian K.D."/>
            <person name="Lei B."/>
            <person name="Hoff J.S."/>
            <person name="Mammarella N.D."/>
            <person name="Liu M.-Y."/>
            <person name="Smoot J.C."/>
            <person name="Porcella S.F."/>
            <person name="Parkins L.D."/>
            <person name="Campbell D.S."/>
            <person name="Smith T.M."/>
            <person name="McCormick J.K."/>
            <person name="Leung D.Y.M."/>
            <person name="Schlievert P.M."/>
            <person name="Musser J.M."/>
        </authorList>
    </citation>
    <scope>NUCLEOTIDE SEQUENCE [LARGE SCALE GENOMIC DNA]</scope>
    <source>
        <strain>ATCC BAA-595 / MGAS315</strain>
    </source>
</reference>
<sequence>MVNIILLIVSALIGLILGYALISIRLKSAKEAAELTLLNAEQEAVDIRGKAEVDAEHIKKTAKRESKANRKELLLEAKEEARKYREEIEQEFKSERQELKQLETRLAERSLTLDRKDENLSSKEKVLDSKEQSLTDKSKHIDERQLQVEKLEEEKKAELEKVAAMTIAEAREVILMETENKLTHEIATRIRDAERDIKDRTVKTAKDLLAQAMQRLAGEYVTEQTITSVHLPDDNMKGRIIGREGRNIRTLESLTGIDVIIDDTPEVVILSGFDPIRREIARMTLESLIADGRIHPARIEELVEKNRLEMDNRIREYGEAAAYEIGAPNLHPDLIKIMGRLQFRTSFGQNVLRHSVEVGKLAGILAGELGENVALARRAGFLHDMGKAIDREVEGSHVEIGMEFARKYKEHPVVVNTIASHHGDVEPDSVIAVLVAAADALSSARPGARNESMENYIKRLRDLEEIATSFDGVQNSFALQAGREIRIMVQPEKISDDQVVILSHKVREKIENNLDYPGNIKVTVIREMRAVDYAK</sequence>
<feature type="chain" id="PRO_0000163800" description="Ribonuclease Y">
    <location>
        <begin position="1"/>
        <end position="535"/>
    </location>
</feature>
<feature type="transmembrane region" description="Helical" evidence="1">
    <location>
        <begin position="4"/>
        <end position="24"/>
    </location>
</feature>
<feature type="domain" description="KH" evidence="1">
    <location>
        <begin position="225"/>
        <end position="285"/>
    </location>
</feature>
<feature type="domain" description="HD" evidence="2">
    <location>
        <begin position="351"/>
        <end position="444"/>
    </location>
</feature>
<feature type="region of interest" description="Disordered" evidence="3">
    <location>
        <begin position="118"/>
        <end position="141"/>
    </location>
</feature>
<organism>
    <name type="scientific">Streptococcus pyogenes serotype M3 (strain ATCC BAA-595 / MGAS315)</name>
    <dbReference type="NCBI Taxonomy" id="198466"/>
    <lineage>
        <taxon>Bacteria</taxon>
        <taxon>Bacillati</taxon>
        <taxon>Bacillota</taxon>
        <taxon>Bacilli</taxon>
        <taxon>Lactobacillales</taxon>
        <taxon>Streptococcaceae</taxon>
        <taxon>Streptococcus</taxon>
    </lineage>
</organism>
<gene>
    <name evidence="1" type="primary">rny</name>
    <name type="ordered locus">SpyM3_1376</name>
</gene>
<comment type="function">
    <text evidence="1">Endoribonuclease that initiates mRNA decay.</text>
</comment>
<comment type="subcellular location">
    <subcellularLocation>
        <location evidence="1">Cell membrane</location>
        <topology evidence="1">Single-pass membrane protein</topology>
    </subcellularLocation>
</comment>
<comment type="similarity">
    <text evidence="1">Belongs to the RNase Y family.</text>
</comment>
<dbReference type="EC" id="3.1.-.-" evidence="1"/>
<dbReference type="EMBL" id="AE014074">
    <property type="protein sequence ID" value="AAM79983.1"/>
    <property type="molecule type" value="Genomic_DNA"/>
</dbReference>
<dbReference type="RefSeq" id="WP_002988954.1">
    <property type="nucleotide sequence ID" value="NC_004070.1"/>
</dbReference>
<dbReference type="SMR" id="P0DF20"/>
<dbReference type="KEGG" id="spg:SpyM3_1376"/>
<dbReference type="HOGENOM" id="CLU_028328_1_0_9"/>
<dbReference type="Proteomes" id="UP000000564">
    <property type="component" value="Chromosome"/>
</dbReference>
<dbReference type="GO" id="GO:0005886">
    <property type="term" value="C:plasma membrane"/>
    <property type="evidence" value="ECO:0007669"/>
    <property type="project" value="UniProtKB-SubCell"/>
</dbReference>
<dbReference type="GO" id="GO:0003723">
    <property type="term" value="F:RNA binding"/>
    <property type="evidence" value="ECO:0007669"/>
    <property type="project" value="UniProtKB-UniRule"/>
</dbReference>
<dbReference type="GO" id="GO:0004521">
    <property type="term" value="F:RNA endonuclease activity"/>
    <property type="evidence" value="ECO:0007669"/>
    <property type="project" value="UniProtKB-UniRule"/>
</dbReference>
<dbReference type="GO" id="GO:0006402">
    <property type="term" value="P:mRNA catabolic process"/>
    <property type="evidence" value="ECO:0007669"/>
    <property type="project" value="UniProtKB-UniRule"/>
</dbReference>
<dbReference type="CDD" id="cd00077">
    <property type="entry name" value="HDc"/>
    <property type="match status" value="1"/>
</dbReference>
<dbReference type="CDD" id="cd22431">
    <property type="entry name" value="KH-I_RNaseY"/>
    <property type="match status" value="1"/>
</dbReference>
<dbReference type="FunFam" id="1.10.3210.10:FF:000003">
    <property type="entry name" value="Ribonuclease Y"/>
    <property type="match status" value="1"/>
</dbReference>
<dbReference type="Gene3D" id="1.10.3210.10">
    <property type="entry name" value="Hypothetical protein af1432"/>
    <property type="match status" value="1"/>
</dbReference>
<dbReference type="Gene3D" id="3.30.1370.10">
    <property type="entry name" value="K Homology domain, type 1"/>
    <property type="match status" value="1"/>
</dbReference>
<dbReference type="HAMAP" id="MF_00335">
    <property type="entry name" value="RNase_Y"/>
    <property type="match status" value="1"/>
</dbReference>
<dbReference type="InterPro" id="IPR003607">
    <property type="entry name" value="HD/PDEase_dom"/>
</dbReference>
<dbReference type="InterPro" id="IPR006674">
    <property type="entry name" value="HD_domain"/>
</dbReference>
<dbReference type="InterPro" id="IPR006675">
    <property type="entry name" value="HDIG_dom"/>
</dbReference>
<dbReference type="InterPro" id="IPR004087">
    <property type="entry name" value="KH_dom"/>
</dbReference>
<dbReference type="InterPro" id="IPR004088">
    <property type="entry name" value="KH_dom_type_1"/>
</dbReference>
<dbReference type="InterPro" id="IPR036612">
    <property type="entry name" value="KH_dom_type_1_sf"/>
</dbReference>
<dbReference type="InterPro" id="IPR017705">
    <property type="entry name" value="Ribonuclease_Y"/>
</dbReference>
<dbReference type="InterPro" id="IPR022711">
    <property type="entry name" value="RNase_Y_N"/>
</dbReference>
<dbReference type="NCBIfam" id="TIGR00277">
    <property type="entry name" value="HDIG"/>
    <property type="match status" value="1"/>
</dbReference>
<dbReference type="NCBIfam" id="NF000997">
    <property type="entry name" value="PRK00106.1"/>
    <property type="match status" value="1"/>
</dbReference>
<dbReference type="NCBIfam" id="TIGR03319">
    <property type="entry name" value="RNase_Y"/>
    <property type="match status" value="1"/>
</dbReference>
<dbReference type="PANTHER" id="PTHR12826">
    <property type="entry name" value="RIBONUCLEASE Y"/>
    <property type="match status" value="1"/>
</dbReference>
<dbReference type="PANTHER" id="PTHR12826:SF15">
    <property type="entry name" value="RIBONUCLEASE Y"/>
    <property type="match status" value="1"/>
</dbReference>
<dbReference type="Pfam" id="PF01966">
    <property type="entry name" value="HD"/>
    <property type="match status" value="1"/>
</dbReference>
<dbReference type="Pfam" id="PF00013">
    <property type="entry name" value="KH_1"/>
    <property type="match status" value="1"/>
</dbReference>
<dbReference type="Pfam" id="PF12072">
    <property type="entry name" value="RNase_Y_N"/>
    <property type="match status" value="1"/>
</dbReference>
<dbReference type="SMART" id="SM00471">
    <property type="entry name" value="HDc"/>
    <property type="match status" value="1"/>
</dbReference>
<dbReference type="SMART" id="SM00322">
    <property type="entry name" value="KH"/>
    <property type="match status" value="1"/>
</dbReference>
<dbReference type="SUPFAM" id="SSF54791">
    <property type="entry name" value="Eukaryotic type KH-domain (KH-domain type I)"/>
    <property type="match status" value="1"/>
</dbReference>
<dbReference type="SUPFAM" id="SSF109604">
    <property type="entry name" value="HD-domain/PDEase-like"/>
    <property type="match status" value="1"/>
</dbReference>
<dbReference type="PROSITE" id="PS51831">
    <property type="entry name" value="HD"/>
    <property type="match status" value="1"/>
</dbReference>
<dbReference type="PROSITE" id="PS50084">
    <property type="entry name" value="KH_TYPE_1"/>
    <property type="match status" value="1"/>
</dbReference>
<accession>P0DF20</accession>
<accession>P67285</accession>
<accession>Q99YM4</accession>